<proteinExistence type="evidence at protein level"/>
<organism evidence="8">
    <name type="scientific">Escherichia coli</name>
    <dbReference type="NCBI Taxonomy" id="562"/>
    <lineage>
        <taxon>Bacteria</taxon>
        <taxon>Pseudomonadati</taxon>
        <taxon>Pseudomonadota</taxon>
        <taxon>Gammaproteobacteria</taxon>
        <taxon>Enterobacterales</taxon>
        <taxon>Enterobacteriaceae</taxon>
        <taxon>Escherichia</taxon>
    </lineage>
</organism>
<sequence>MRHRQDNLLANRTLLPGMASGQYVFRLCTFSPVVRYFSLLPCLCILSFSSPAAMLSPGDRSAIQQQQQQLLDENQRQRDALERSAPLTITPSPETSAGTEGPCFTVSSIVVSGATRLTSAETDRLVAPWVNQCLNITGLTAVTDAMTDSYIRRGYITSRAFLTEQDLSGGVLHITVMEGRLQQIRAEGADLPARTLKMVFPGMEGKVLNLRDIEQGMEQINRLRTEPVQIEISPGDREGWSVVTLTALPEWPVTGSVGIDNSGQKSTGTGQLNGVLSFNNPLGLADNWFVSGGRSSDFSVSHDARNFAAGVSLPYGYTLVDYTYSWSDYLSTIDNRGWRWRSTGDLQTHRLGLSHVLFRNGDMKTALTGGLQHRIIHNYLDDVLLQGSSRKLTSFSVGLNHTHKFLGGVGTLNPVFTRGMPWFGAESDHGKRGDLPVNQFRKWSVSASFQRPVTDRVWWLTSAYAQWSPDRLHGVEQLSLGGESSVRGFKDQYISGNNGGYLRNELSWSLFSLPYVGTVRAVAALDGGWLHSDSDDPYSSGTLWGAAAGLSTTSGHVSGSFTAGLPLVYPDWLAPDHLTVYWRVAVAF</sequence>
<keyword id="KW-0002">3D-structure</keyword>
<keyword id="KW-0998">Cell outer membrane</keyword>
<keyword id="KW-0406">Ion transport</keyword>
<keyword id="KW-0472">Membrane</keyword>
<keyword id="KW-0626">Porin</keyword>
<keyword id="KW-0653">Protein transport</keyword>
<keyword id="KW-0812">Transmembrane</keyword>
<keyword id="KW-1134">Transmembrane beta strand</keyword>
<keyword id="KW-0813">Transport</keyword>
<accession>Q3YL97</accession>
<gene>
    <name evidence="3" type="primary">cdiB</name>
</gene>
<protein>
    <recommendedName>
        <fullName evidence="4">Outer membrane transporter CdiB</fullName>
    </recommendedName>
</protein>
<reference key="1">
    <citation type="journal article" date="2005" name="Science">
        <title>Contact-dependent inhibition of growth in Escherichia coli.</title>
        <authorList>
            <person name="Aoki S.K."/>
            <person name="Pamma R."/>
            <person name="Hernday A.D."/>
            <person name="Bickham J.E."/>
            <person name="Braaten B.A."/>
            <person name="Low D.A."/>
        </authorList>
    </citation>
    <scope>NUCLEOTIDE SEQUENCE [GENOMIC DNA]</scope>
    <scope>FUNCTION</scope>
    <scope>DISRUPTION PHENOTYPE</scope>
    <source>
        <strain>EC93</strain>
    </source>
</reference>
<reference key="2">
    <citation type="journal article" date="2009" name="J. Bacteriol.">
        <title>Contact-dependent growth inhibition causes reversible metabolic downregulation in Escherichia coli.</title>
        <authorList>
            <person name="Aoki S.K."/>
            <person name="Webb J.S."/>
            <person name="Braaten B.A."/>
            <person name="Low D.A."/>
        </authorList>
    </citation>
    <scope>FUNCTION</scope>
    <source>
        <strain>EC93</strain>
    </source>
</reference>
<reference key="3">
    <citation type="journal article" date="2010" name="Nature">
        <title>A widespread family of polymorphic contact-dependent toxin delivery systems in bacteria.</title>
        <authorList>
            <person name="Aoki S.K."/>
            <person name="Diner E.J."/>
            <person name="de Roodenbeke C.T."/>
            <person name="Burgess B.R."/>
            <person name="Poole S.J."/>
            <person name="Braaten B.A."/>
            <person name="Jones A.M."/>
            <person name="Webb J.S."/>
            <person name="Hayes C.S."/>
            <person name="Cotter P.A."/>
            <person name="Low D.A."/>
        </authorList>
    </citation>
    <scope>FUNCTION</scope>
    <source>
        <strain>EC93</strain>
    </source>
</reference>
<feature type="chain" id="PRO_0000432084" description="Outer membrane transporter CdiB">
    <location>
        <begin position="1"/>
        <end position="588"/>
    </location>
</feature>
<feature type="domain" description="POTRA" evidence="1">
    <location>
        <begin position="104"/>
        <end position="179"/>
    </location>
</feature>
<feature type="helix" evidence="9">
    <location>
        <begin position="57"/>
        <end position="82"/>
    </location>
</feature>
<feature type="strand" evidence="9">
    <location>
        <begin position="104"/>
        <end position="106"/>
    </location>
</feature>
<feature type="strand" evidence="9">
    <location>
        <begin position="108"/>
        <end position="112"/>
    </location>
</feature>
<feature type="helix" evidence="9">
    <location>
        <begin position="119"/>
        <end position="126"/>
    </location>
</feature>
<feature type="helix" evidence="9">
    <location>
        <begin position="127"/>
        <end position="129"/>
    </location>
</feature>
<feature type="strand" evidence="9">
    <location>
        <begin position="132"/>
        <end position="134"/>
    </location>
</feature>
<feature type="helix" evidence="9">
    <location>
        <begin position="136"/>
        <end position="152"/>
    </location>
</feature>
<feature type="strand" evidence="9">
    <location>
        <begin position="159"/>
        <end position="162"/>
    </location>
</feature>
<feature type="strand" evidence="9">
    <location>
        <begin position="170"/>
        <end position="177"/>
    </location>
</feature>
<feature type="strand" evidence="9">
    <location>
        <begin position="180"/>
        <end position="185"/>
    </location>
</feature>
<feature type="helix" evidence="9">
    <location>
        <begin position="187"/>
        <end position="189"/>
    </location>
</feature>
<feature type="helix" evidence="9">
    <location>
        <begin position="193"/>
        <end position="199"/>
    </location>
</feature>
<feature type="helix" evidence="9">
    <location>
        <begin position="210"/>
        <end position="221"/>
    </location>
</feature>
<feature type="strand" evidence="9">
    <location>
        <begin position="229"/>
        <end position="234"/>
    </location>
</feature>
<feature type="strand" evidence="9">
    <location>
        <begin position="240"/>
        <end position="246"/>
    </location>
</feature>
<feature type="strand" evidence="9">
    <location>
        <begin position="252"/>
        <end position="261"/>
    </location>
</feature>
<feature type="turn" evidence="9">
    <location>
        <begin position="265"/>
        <end position="267"/>
    </location>
</feature>
<feature type="strand" evidence="9">
    <location>
        <begin position="271"/>
        <end position="280"/>
    </location>
</feature>
<feature type="strand" evidence="9">
    <location>
        <begin position="283"/>
        <end position="285"/>
    </location>
</feature>
<feature type="strand" evidence="9">
    <location>
        <begin position="287"/>
        <end position="295"/>
    </location>
</feature>
<feature type="strand" evidence="9">
    <location>
        <begin position="300"/>
        <end position="315"/>
    </location>
</feature>
<feature type="strand" evidence="9">
    <location>
        <begin position="318"/>
        <end position="333"/>
    </location>
</feature>
<feature type="strand" evidence="9">
    <location>
        <begin position="340"/>
        <end position="360"/>
    </location>
</feature>
<feature type="strand" evidence="9">
    <location>
        <begin position="363"/>
        <end position="380"/>
    </location>
</feature>
<feature type="turn" evidence="9">
    <location>
        <begin position="386"/>
        <end position="388"/>
    </location>
</feature>
<feature type="strand" evidence="9">
    <location>
        <begin position="390"/>
        <end position="405"/>
    </location>
</feature>
<feature type="strand" evidence="9">
    <location>
        <begin position="408"/>
        <end position="419"/>
    </location>
</feature>
<feature type="strand" evidence="9">
    <location>
        <begin position="441"/>
        <end position="467"/>
    </location>
</feature>
<feature type="strand" evidence="9">
    <location>
        <begin position="482"/>
        <end position="486"/>
    </location>
</feature>
<feature type="strand" evidence="9">
    <location>
        <begin position="495"/>
        <end position="512"/>
    </location>
</feature>
<feature type="strand" evidence="9">
    <location>
        <begin position="514"/>
        <end position="516"/>
    </location>
</feature>
<feature type="strand" evidence="9">
    <location>
        <begin position="518"/>
        <end position="531"/>
    </location>
</feature>
<feature type="helix" evidence="9">
    <location>
        <begin position="537"/>
        <end position="539"/>
    </location>
</feature>
<feature type="strand" evidence="9">
    <location>
        <begin position="540"/>
        <end position="554"/>
    </location>
</feature>
<feature type="strand" evidence="9">
    <location>
        <begin position="557"/>
        <end position="568"/>
    </location>
</feature>
<feature type="strand" evidence="9">
    <location>
        <begin position="579"/>
        <end position="587"/>
    </location>
</feature>
<dbReference type="EMBL" id="DQ100454">
    <property type="protein sequence ID" value="AAZ57197.1"/>
    <property type="molecule type" value="Genomic_DNA"/>
</dbReference>
<dbReference type="RefSeq" id="WP_188214218.1">
    <property type="nucleotide sequence ID" value="NZ_CP061330.1"/>
</dbReference>
<dbReference type="PDB" id="6WIM">
    <property type="method" value="X-ray"/>
    <property type="resolution" value="2.60 A"/>
    <property type="chains" value="A=53-588"/>
</dbReference>
<dbReference type="PDBsum" id="6WIM"/>
<dbReference type="SMR" id="Q3YL97"/>
<dbReference type="TCDB" id="1.B.20.1.3">
    <property type="family name" value="the two-partner secretion (tps) family"/>
</dbReference>
<dbReference type="GO" id="GO:0009279">
    <property type="term" value="C:cell outer membrane"/>
    <property type="evidence" value="ECO:0007669"/>
    <property type="project" value="UniProtKB-SubCell"/>
</dbReference>
<dbReference type="GO" id="GO:0046930">
    <property type="term" value="C:pore complex"/>
    <property type="evidence" value="ECO:0007669"/>
    <property type="project" value="UniProtKB-KW"/>
</dbReference>
<dbReference type="GO" id="GO:0098046">
    <property type="term" value="C:type V protein secretion system complex"/>
    <property type="evidence" value="ECO:0007669"/>
    <property type="project" value="TreeGrafter"/>
</dbReference>
<dbReference type="GO" id="GO:0015288">
    <property type="term" value="F:porin activity"/>
    <property type="evidence" value="ECO:0007669"/>
    <property type="project" value="UniProtKB-KW"/>
</dbReference>
<dbReference type="GO" id="GO:0008320">
    <property type="term" value="F:protein transmembrane transporter activity"/>
    <property type="evidence" value="ECO:0007669"/>
    <property type="project" value="TreeGrafter"/>
</dbReference>
<dbReference type="GO" id="GO:0006811">
    <property type="term" value="P:monoatomic ion transport"/>
    <property type="evidence" value="ECO:0007669"/>
    <property type="project" value="UniProtKB-KW"/>
</dbReference>
<dbReference type="GO" id="GO:0046819">
    <property type="term" value="P:protein secretion by the type V secretion system"/>
    <property type="evidence" value="ECO:0007669"/>
    <property type="project" value="TreeGrafter"/>
</dbReference>
<dbReference type="Gene3D" id="3.10.20.310">
    <property type="entry name" value="membrane protein fhac"/>
    <property type="match status" value="1"/>
</dbReference>
<dbReference type="Gene3D" id="2.40.160.50">
    <property type="entry name" value="membrane protein fhac: a member of the omp85/tpsb transporter family"/>
    <property type="match status" value="1"/>
</dbReference>
<dbReference type="InterPro" id="IPR005565">
    <property type="entry name" value="Hemolysn_activator_HlyB_C"/>
</dbReference>
<dbReference type="InterPro" id="IPR013686">
    <property type="entry name" value="Polypept-transport_assoc_ShlB"/>
</dbReference>
<dbReference type="InterPro" id="IPR034746">
    <property type="entry name" value="POTRA"/>
</dbReference>
<dbReference type="InterPro" id="IPR035251">
    <property type="entry name" value="ShlB_POTRA"/>
</dbReference>
<dbReference type="InterPro" id="IPR027282">
    <property type="entry name" value="TPS"/>
</dbReference>
<dbReference type="InterPro" id="IPR051544">
    <property type="entry name" value="TPS_OM_transporter"/>
</dbReference>
<dbReference type="PANTHER" id="PTHR34597:SF3">
    <property type="entry name" value="OUTER MEMBRANE TRANSPORTER CDIB"/>
    <property type="match status" value="1"/>
</dbReference>
<dbReference type="PANTHER" id="PTHR34597">
    <property type="entry name" value="SLR1661 PROTEIN"/>
    <property type="match status" value="1"/>
</dbReference>
<dbReference type="Pfam" id="PF08479">
    <property type="entry name" value="POTRA_2"/>
    <property type="match status" value="1"/>
</dbReference>
<dbReference type="Pfam" id="PF17287">
    <property type="entry name" value="POTRA_3"/>
    <property type="match status" value="1"/>
</dbReference>
<dbReference type="Pfam" id="PF03865">
    <property type="entry name" value="ShlB"/>
    <property type="match status" value="1"/>
</dbReference>
<dbReference type="PIRSF" id="PIRSF029745">
    <property type="entry name" value="FhaC"/>
    <property type="match status" value="1"/>
</dbReference>
<dbReference type="PROSITE" id="PS51779">
    <property type="entry name" value="POTRA"/>
    <property type="match status" value="1"/>
</dbReference>
<name>CDIB_ECOLX</name>
<comment type="function">
    <text evidence="2 6 7">Potential outer membrane protein component of a toxin-immunity protein module, which functions as a cellular contact-dependent growth inhibition (CDI) system. CDI modules allow bacteria to communicate with and inhibit the growth of closely related neighboring bacteria in a contact-dependent fashion. This protein may be required for secretion and assembly of the CdiA toxin protein. Inhibitory cells must be in logarithmic (not stationary) phase to inhibit growth of their targets, while the presence of P or S but not type 1 pili protects the target cells against growth inhibition.</text>
</comment>
<comment type="function">
    <text evidence="5">Probable member of a two partner secretion pathway (TPS) in which it mediates the secretion of CdiA.</text>
</comment>
<comment type="subcellular location">
    <subcellularLocation>
        <location evidence="5">Cell outer membrane</location>
    </subcellularLocation>
</comment>
<comment type="disruption phenotype">
    <text evidence="2">Loss of contact-dependent growth inhibition.</text>
</comment>
<comment type="similarity">
    <text evidence="4">Belongs to the TPS (TC 1.B.20) family.</text>
</comment>
<evidence type="ECO:0000255" key="1">
    <source>
        <dbReference type="PROSITE-ProRule" id="PRU01115"/>
    </source>
</evidence>
<evidence type="ECO:0000269" key="2">
    <source>
    </source>
</evidence>
<evidence type="ECO:0000303" key="3">
    <source>
    </source>
</evidence>
<evidence type="ECO:0000305" key="4"/>
<evidence type="ECO:0000305" key="5">
    <source>
    </source>
</evidence>
<evidence type="ECO:0000305" key="6">
    <source>
    </source>
</evidence>
<evidence type="ECO:0000305" key="7">
    <source>
    </source>
</evidence>
<evidence type="ECO:0000312" key="8">
    <source>
        <dbReference type="EMBL" id="AAZ57197.1"/>
    </source>
</evidence>
<evidence type="ECO:0007829" key="9">
    <source>
        <dbReference type="PDB" id="6WIM"/>
    </source>
</evidence>